<feature type="chain" id="PRO_0000332774" description="Ras-related protein RabY">
    <location>
        <begin position="1"/>
        <end position="233"/>
    </location>
</feature>
<feature type="propeptide" id="PRO_0000370839" description="Removed in mature form" evidence="2">
    <location>
        <begin position="234"/>
        <end position="236"/>
    </location>
</feature>
<feature type="region of interest" description="Disordered" evidence="3">
    <location>
        <begin position="192"/>
        <end position="236"/>
    </location>
</feature>
<feature type="short sequence motif" description="Effector region" evidence="1">
    <location>
        <begin position="40"/>
        <end position="48"/>
    </location>
</feature>
<feature type="compositionally biased region" description="Low complexity" evidence="3">
    <location>
        <begin position="192"/>
        <end position="225"/>
    </location>
</feature>
<feature type="binding site" evidence="1">
    <location>
        <begin position="18"/>
        <end position="25"/>
    </location>
    <ligand>
        <name>GTP</name>
        <dbReference type="ChEBI" id="CHEBI:37565"/>
    </ligand>
</feature>
<feature type="binding site" evidence="1">
    <location>
        <begin position="66"/>
        <end position="70"/>
    </location>
    <ligand>
        <name>GTP</name>
        <dbReference type="ChEBI" id="CHEBI:37565"/>
    </ligand>
</feature>
<feature type="binding site" evidence="1">
    <location>
        <begin position="126"/>
        <end position="129"/>
    </location>
    <ligand>
        <name>GTP</name>
        <dbReference type="ChEBI" id="CHEBI:37565"/>
    </ligand>
</feature>
<feature type="modified residue" description="Cysteine methyl ester" evidence="2">
    <location>
        <position position="233"/>
    </location>
</feature>
<feature type="lipid moiety-binding region" description="S-geranylgeranyl cysteine" evidence="1">
    <location>
        <position position="233"/>
    </location>
</feature>
<protein>
    <recommendedName>
        <fullName>Ras-related protein RabY</fullName>
    </recommendedName>
</protein>
<comment type="subcellular location">
    <subcellularLocation>
        <location evidence="4">Cell membrane</location>
        <topology evidence="4">Lipid-anchor</topology>
        <orientation evidence="4">Cytoplasmic side</orientation>
    </subcellularLocation>
</comment>
<comment type="similarity">
    <text evidence="4">Belongs to the small GTPase superfamily. Rab family.</text>
</comment>
<organism>
    <name type="scientific">Dictyostelium discoideum</name>
    <name type="common">Social amoeba</name>
    <dbReference type="NCBI Taxonomy" id="44689"/>
    <lineage>
        <taxon>Eukaryota</taxon>
        <taxon>Amoebozoa</taxon>
        <taxon>Evosea</taxon>
        <taxon>Eumycetozoa</taxon>
        <taxon>Dictyostelia</taxon>
        <taxon>Dictyosteliales</taxon>
        <taxon>Dictyosteliaceae</taxon>
        <taxon>Dictyostelium</taxon>
    </lineage>
</organism>
<dbReference type="EMBL" id="AAFI02000046">
    <property type="protein sequence ID" value="EAL66307.1"/>
    <property type="molecule type" value="Genomic_DNA"/>
</dbReference>
<dbReference type="RefSeq" id="XP_640284.1">
    <property type="nucleotide sequence ID" value="XM_635192.1"/>
</dbReference>
<dbReference type="SMR" id="Q54SV1"/>
<dbReference type="STRING" id="44689.Q54SV1"/>
<dbReference type="PaxDb" id="44689-DDB0229421"/>
<dbReference type="EnsemblProtists" id="EAL66307">
    <property type="protein sequence ID" value="EAL66307"/>
    <property type="gene ID" value="DDB_G0282203"/>
</dbReference>
<dbReference type="GeneID" id="8623461"/>
<dbReference type="KEGG" id="ddi:DDB_G0282203"/>
<dbReference type="dictyBase" id="DDB_G0282203">
    <property type="gene designation" value="rabY"/>
</dbReference>
<dbReference type="VEuPathDB" id="AmoebaDB:DDB_G0282203"/>
<dbReference type="eggNOG" id="KOG0084">
    <property type="taxonomic scope" value="Eukaryota"/>
</dbReference>
<dbReference type="HOGENOM" id="CLU_041217_23_1_1"/>
<dbReference type="InParanoid" id="Q54SV1"/>
<dbReference type="OMA" id="VENTWSE"/>
<dbReference type="PhylomeDB" id="Q54SV1"/>
<dbReference type="Reactome" id="R-DDI-162658">
    <property type="pathway name" value="Golgi Cisternae Pericentriolar Stack Reorganization"/>
</dbReference>
<dbReference type="Reactome" id="R-DDI-204005">
    <property type="pathway name" value="COPII-mediated vesicle transport"/>
</dbReference>
<dbReference type="Reactome" id="R-DDI-6807878">
    <property type="pathway name" value="COPI-mediated anterograde transport"/>
</dbReference>
<dbReference type="Reactome" id="R-DDI-6811434">
    <property type="pathway name" value="COPI-dependent Golgi-to-ER retrograde traffic"/>
</dbReference>
<dbReference type="Reactome" id="R-DDI-6811440">
    <property type="pathway name" value="Retrograde transport at the Trans-Golgi-Network"/>
</dbReference>
<dbReference type="Reactome" id="R-DDI-8873719">
    <property type="pathway name" value="RAB geranylgeranylation"/>
</dbReference>
<dbReference type="Reactome" id="R-DDI-8876198">
    <property type="pathway name" value="RAB GEFs exchange GTP for GDP on RABs"/>
</dbReference>
<dbReference type="PRO" id="PR:Q54SV1"/>
<dbReference type="Proteomes" id="UP000002195">
    <property type="component" value="Chromosome 3"/>
</dbReference>
<dbReference type="GO" id="GO:0012505">
    <property type="term" value="C:endomembrane system"/>
    <property type="evidence" value="ECO:0000318"/>
    <property type="project" value="GO_Central"/>
</dbReference>
<dbReference type="GO" id="GO:0005886">
    <property type="term" value="C:plasma membrane"/>
    <property type="evidence" value="ECO:0007669"/>
    <property type="project" value="UniProtKB-SubCell"/>
</dbReference>
<dbReference type="GO" id="GO:0005525">
    <property type="term" value="F:GTP binding"/>
    <property type="evidence" value="ECO:0007669"/>
    <property type="project" value="UniProtKB-KW"/>
</dbReference>
<dbReference type="GO" id="GO:0003924">
    <property type="term" value="F:GTPase activity"/>
    <property type="evidence" value="ECO:0000318"/>
    <property type="project" value="GO_Central"/>
</dbReference>
<dbReference type="GO" id="GO:0006971">
    <property type="term" value="P:hypotonic response"/>
    <property type="evidence" value="ECO:0007007"/>
    <property type="project" value="dictyBase"/>
</dbReference>
<dbReference type="GO" id="GO:0006886">
    <property type="term" value="P:intracellular protein transport"/>
    <property type="evidence" value="ECO:0000318"/>
    <property type="project" value="GO_Central"/>
</dbReference>
<dbReference type="CDD" id="cd00154">
    <property type="entry name" value="Rab"/>
    <property type="match status" value="1"/>
</dbReference>
<dbReference type="FunFam" id="3.40.50.300:FF:003801">
    <property type="entry name" value="Ras-related protein RabY"/>
    <property type="match status" value="1"/>
</dbReference>
<dbReference type="Gene3D" id="3.40.50.300">
    <property type="entry name" value="P-loop containing nucleotide triphosphate hydrolases"/>
    <property type="match status" value="1"/>
</dbReference>
<dbReference type="InterPro" id="IPR027417">
    <property type="entry name" value="P-loop_NTPase"/>
</dbReference>
<dbReference type="InterPro" id="IPR050227">
    <property type="entry name" value="Rab"/>
</dbReference>
<dbReference type="InterPro" id="IPR005225">
    <property type="entry name" value="Small_GTP-bd"/>
</dbReference>
<dbReference type="InterPro" id="IPR001806">
    <property type="entry name" value="Small_GTPase"/>
</dbReference>
<dbReference type="NCBIfam" id="TIGR00231">
    <property type="entry name" value="small_GTP"/>
    <property type="match status" value="1"/>
</dbReference>
<dbReference type="PANTHER" id="PTHR47977">
    <property type="entry name" value="RAS-RELATED PROTEIN RAB"/>
    <property type="match status" value="1"/>
</dbReference>
<dbReference type="Pfam" id="PF00071">
    <property type="entry name" value="Ras"/>
    <property type="match status" value="1"/>
</dbReference>
<dbReference type="PRINTS" id="PR00449">
    <property type="entry name" value="RASTRNSFRMNG"/>
</dbReference>
<dbReference type="SMART" id="SM00175">
    <property type="entry name" value="RAB"/>
    <property type="match status" value="1"/>
</dbReference>
<dbReference type="SMART" id="SM00173">
    <property type="entry name" value="RAS"/>
    <property type="match status" value="1"/>
</dbReference>
<dbReference type="SMART" id="SM00174">
    <property type="entry name" value="RHO"/>
    <property type="match status" value="1"/>
</dbReference>
<dbReference type="SUPFAM" id="SSF52540">
    <property type="entry name" value="P-loop containing nucleoside triphosphate hydrolases"/>
    <property type="match status" value="1"/>
</dbReference>
<dbReference type="PROSITE" id="PS51419">
    <property type="entry name" value="RAB"/>
    <property type="match status" value="1"/>
</dbReference>
<keyword id="KW-1003">Cell membrane</keyword>
<keyword id="KW-0342">GTP-binding</keyword>
<keyword id="KW-0449">Lipoprotein</keyword>
<keyword id="KW-0472">Membrane</keyword>
<keyword id="KW-0488">Methylation</keyword>
<keyword id="KW-0547">Nucleotide-binding</keyword>
<keyword id="KW-0636">Prenylation</keyword>
<keyword id="KW-1185">Reference proteome</keyword>
<accession>Q54SV1</accession>
<sequence>MNSEKPDYNYLFKIVIIGDRKTGKTCLMNRFVENTWSEEYRQTNLLHFKVKTIYIDCKIIKLQIWDSQADENFRFNNNNLSNYRSASGFLVVYDCTNENSFSNLKHWIKDIKLYGRPNAINIVVSNKSDLVNEKVIDSDVAKSYCDSLEIPFIETSSKHSSNVEDCFVLLIKNVMKYLETEPTIPQQQQQQQQQQQQQQQQQQQQQQQQQQQQQQQQQQQQQHQQSSKTKIGCLIQ</sequence>
<name>RABY_DICDI</name>
<gene>
    <name type="primary">rabY</name>
    <name type="ORF">DDB_G0282203</name>
</gene>
<proteinExistence type="inferred from homology"/>
<reference key="1">
    <citation type="journal article" date="2005" name="Nature">
        <title>The genome of the social amoeba Dictyostelium discoideum.</title>
        <authorList>
            <person name="Eichinger L."/>
            <person name="Pachebat J.A."/>
            <person name="Gloeckner G."/>
            <person name="Rajandream M.A."/>
            <person name="Sucgang R."/>
            <person name="Berriman M."/>
            <person name="Song J."/>
            <person name="Olsen R."/>
            <person name="Szafranski K."/>
            <person name="Xu Q."/>
            <person name="Tunggal B."/>
            <person name="Kummerfeld S."/>
            <person name="Madera M."/>
            <person name="Konfortov B.A."/>
            <person name="Rivero F."/>
            <person name="Bankier A.T."/>
            <person name="Lehmann R."/>
            <person name="Hamlin N."/>
            <person name="Davies R."/>
            <person name="Gaudet P."/>
            <person name="Fey P."/>
            <person name="Pilcher K."/>
            <person name="Chen G."/>
            <person name="Saunders D."/>
            <person name="Sodergren E.J."/>
            <person name="Davis P."/>
            <person name="Kerhornou A."/>
            <person name="Nie X."/>
            <person name="Hall N."/>
            <person name="Anjard C."/>
            <person name="Hemphill L."/>
            <person name="Bason N."/>
            <person name="Farbrother P."/>
            <person name="Desany B."/>
            <person name="Just E."/>
            <person name="Morio T."/>
            <person name="Rost R."/>
            <person name="Churcher C.M."/>
            <person name="Cooper J."/>
            <person name="Haydock S."/>
            <person name="van Driessche N."/>
            <person name="Cronin A."/>
            <person name="Goodhead I."/>
            <person name="Muzny D.M."/>
            <person name="Mourier T."/>
            <person name="Pain A."/>
            <person name="Lu M."/>
            <person name="Harper D."/>
            <person name="Lindsay R."/>
            <person name="Hauser H."/>
            <person name="James K.D."/>
            <person name="Quiles M."/>
            <person name="Madan Babu M."/>
            <person name="Saito T."/>
            <person name="Buchrieser C."/>
            <person name="Wardroper A."/>
            <person name="Felder M."/>
            <person name="Thangavelu M."/>
            <person name="Johnson D."/>
            <person name="Knights A."/>
            <person name="Loulseged H."/>
            <person name="Mungall K.L."/>
            <person name="Oliver K."/>
            <person name="Price C."/>
            <person name="Quail M.A."/>
            <person name="Urushihara H."/>
            <person name="Hernandez J."/>
            <person name="Rabbinowitsch E."/>
            <person name="Steffen D."/>
            <person name="Sanders M."/>
            <person name="Ma J."/>
            <person name="Kohara Y."/>
            <person name="Sharp S."/>
            <person name="Simmonds M.N."/>
            <person name="Spiegler S."/>
            <person name="Tivey A."/>
            <person name="Sugano S."/>
            <person name="White B."/>
            <person name="Walker D."/>
            <person name="Woodward J.R."/>
            <person name="Winckler T."/>
            <person name="Tanaka Y."/>
            <person name="Shaulsky G."/>
            <person name="Schleicher M."/>
            <person name="Weinstock G.M."/>
            <person name="Rosenthal A."/>
            <person name="Cox E.C."/>
            <person name="Chisholm R.L."/>
            <person name="Gibbs R.A."/>
            <person name="Loomis W.F."/>
            <person name="Platzer M."/>
            <person name="Kay R.R."/>
            <person name="Williams J.G."/>
            <person name="Dear P.H."/>
            <person name="Noegel A.A."/>
            <person name="Barrell B.G."/>
            <person name="Kuspa A."/>
        </authorList>
    </citation>
    <scope>NUCLEOTIDE SEQUENCE [LARGE SCALE GENOMIC DNA]</scope>
    <source>
        <strain>AX4</strain>
    </source>
</reference>
<evidence type="ECO:0000250" key="1"/>
<evidence type="ECO:0000255" key="2"/>
<evidence type="ECO:0000256" key="3">
    <source>
        <dbReference type="SAM" id="MobiDB-lite"/>
    </source>
</evidence>
<evidence type="ECO:0000305" key="4"/>